<organism>
    <name type="scientific">Eubacterium barkeri</name>
    <name type="common">Clostridium barkeri</name>
    <dbReference type="NCBI Taxonomy" id="1528"/>
    <lineage>
        <taxon>Bacteria</taxon>
        <taxon>Bacillati</taxon>
        <taxon>Bacillota</taxon>
        <taxon>Clostridia</taxon>
        <taxon>Eubacteriales</taxon>
        <taxon>Eubacteriaceae</taxon>
        <taxon>Eubacterium</taxon>
    </lineage>
</organism>
<keyword id="KW-0002">3D-structure</keyword>
<keyword id="KW-0520">NAD</keyword>
<keyword id="KW-0560">Oxidoreductase</keyword>
<sequence length="301" mass="30873">MEKSIKIGFIGLGAMGKPMAINLLKEGVTVYAFDLMEANVAAVVAQGAQACENNQKVAAASDIIFTSLPNAGIVETVMNGPGGVLSACKAGTVIVDMSSVSPSSTLKMAKVAAEKGIDYVDAPVSGGTKGAEAGTLTIMVGASEAVFEKIQPVLSVIGKDIYHVGDTGAGDAVKIVNNLLLGCNMASLAEALVLGVKCGLKPETMQEIIGKSSGRSYAMEAKMEKFIMSGDFAGGFAMDLQHKDLGLALEAGKEGNVPLPMTAMATQIFEGGRAMGLGREDMSAVIKVWEQMTGVSVSGGQ</sequence>
<name>HMGD_EUBBA</name>
<dbReference type="EC" id="1.1.1.291"/>
<dbReference type="EMBL" id="DQ310789">
    <property type="protein sequence ID" value="ABC88394.1"/>
    <property type="molecule type" value="Genomic_DNA"/>
</dbReference>
<dbReference type="RefSeq" id="WP_242873546.1">
    <property type="nucleotide sequence ID" value="NZ_FNOU01000012.1"/>
</dbReference>
<dbReference type="PDB" id="3CKY">
    <property type="method" value="X-ray"/>
    <property type="resolution" value="2.30 A"/>
    <property type="chains" value="A/B/C/D=1-301"/>
</dbReference>
<dbReference type="PDBsum" id="3CKY"/>
<dbReference type="SMR" id="Q0QLF5"/>
<dbReference type="STRING" id="1528.SAMN04488579_11217"/>
<dbReference type="KEGG" id="ag:ABC88394"/>
<dbReference type="BioCyc" id="MetaCyc:MONOMER-13674"/>
<dbReference type="SABIO-RK" id="Q0QLF5"/>
<dbReference type="UniPathway" id="UPA01010">
    <property type="reaction ID" value="UER01014"/>
</dbReference>
<dbReference type="EvolutionaryTrace" id="Q0QLF5"/>
<dbReference type="GO" id="GO:0043718">
    <property type="term" value="F:2-hydroxymethylglutarate dehydrogenase activity"/>
    <property type="evidence" value="ECO:0000314"/>
    <property type="project" value="UniProtKB"/>
</dbReference>
<dbReference type="GO" id="GO:0051287">
    <property type="term" value="F:NAD binding"/>
    <property type="evidence" value="ECO:0007669"/>
    <property type="project" value="InterPro"/>
</dbReference>
<dbReference type="GO" id="GO:0050661">
    <property type="term" value="F:NADP binding"/>
    <property type="evidence" value="ECO:0007669"/>
    <property type="project" value="InterPro"/>
</dbReference>
<dbReference type="GO" id="GO:1901848">
    <property type="term" value="P:nicotinate catabolic process"/>
    <property type="evidence" value="ECO:0000314"/>
    <property type="project" value="UniProtKB"/>
</dbReference>
<dbReference type="Gene3D" id="1.10.1040.10">
    <property type="entry name" value="N-(1-d-carboxylethyl)-l-norvaline Dehydrogenase, domain 2"/>
    <property type="match status" value="1"/>
</dbReference>
<dbReference type="Gene3D" id="3.40.50.720">
    <property type="entry name" value="NAD(P)-binding Rossmann-like Domain"/>
    <property type="match status" value="1"/>
</dbReference>
<dbReference type="InterPro" id="IPR002204">
    <property type="entry name" value="3-OH-isobutyrate_DH-rel_CS"/>
</dbReference>
<dbReference type="InterPro" id="IPR008927">
    <property type="entry name" value="6-PGluconate_DH-like_C_sf"/>
</dbReference>
<dbReference type="InterPro" id="IPR013328">
    <property type="entry name" value="6PGD_dom2"/>
</dbReference>
<dbReference type="InterPro" id="IPR006115">
    <property type="entry name" value="6PGDH_NADP-bd"/>
</dbReference>
<dbReference type="InterPro" id="IPR029154">
    <property type="entry name" value="HIBADH-like_NADP-bd"/>
</dbReference>
<dbReference type="InterPro" id="IPR015815">
    <property type="entry name" value="HIBADH-related"/>
</dbReference>
<dbReference type="InterPro" id="IPR036291">
    <property type="entry name" value="NAD(P)-bd_dom_sf"/>
</dbReference>
<dbReference type="PANTHER" id="PTHR22981:SF7">
    <property type="entry name" value="3-HYDROXYISOBUTYRATE DEHYDROGENASE, MITOCHONDRIAL"/>
    <property type="match status" value="1"/>
</dbReference>
<dbReference type="PANTHER" id="PTHR22981">
    <property type="entry name" value="3-HYDROXYISOBUTYRATE DEHYDROGENASE-RELATED"/>
    <property type="match status" value="1"/>
</dbReference>
<dbReference type="Pfam" id="PF14833">
    <property type="entry name" value="NAD_binding_11"/>
    <property type="match status" value="1"/>
</dbReference>
<dbReference type="Pfam" id="PF03446">
    <property type="entry name" value="NAD_binding_2"/>
    <property type="match status" value="1"/>
</dbReference>
<dbReference type="PIRSF" id="PIRSF000103">
    <property type="entry name" value="HIBADH"/>
    <property type="match status" value="1"/>
</dbReference>
<dbReference type="SUPFAM" id="SSF48179">
    <property type="entry name" value="6-phosphogluconate dehydrogenase C-terminal domain-like"/>
    <property type="match status" value="1"/>
</dbReference>
<dbReference type="SUPFAM" id="SSF51735">
    <property type="entry name" value="NAD(P)-binding Rossmann-fold domains"/>
    <property type="match status" value="1"/>
</dbReference>
<dbReference type="PROSITE" id="PS00895">
    <property type="entry name" value="3_HYDROXYISOBUT_DH"/>
    <property type="match status" value="1"/>
</dbReference>
<proteinExistence type="evidence at protein level"/>
<comment type="function">
    <text evidence="3">Catalyzes the conversion of 2-formylglutarate to (S)-2-hydroxymethylglutarate. Has very low activity with (S)-3-hydroxyisobutyrate.</text>
</comment>
<comment type="catalytic activity">
    <reaction evidence="2 3">
        <text>(S)-2-hydroxymethylglutarate + NAD(+) = 2-formylglutarate + NADH + H(+)</text>
        <dbReference type="Rhea" id="RHEA:15505"/>
        <dbReference type="ChEBI" id="CHEBI:15378"/>
        <dbReference type="ChEBI" id="CHEBI:57540"/>
        <dbReference type="ChEBI" id="CHEBI:57945"/>
        <dbReference type="ChEBI" id="CHEBI:58776"/>
        <dbReference type="ChEBI" id="CHEBI:180543"/>
        <dbReference type="EC" id="1.1.1.291"/>
    </reaction>
</comment>
<comment type="biophysicochemical properties">
    <kinetics>
        <KM evidence="3">0.24 mM for (S)-2-hydroxymethylglutarate</KM>
        <KM evidence="3">0.14 mM for NAD(+)</KM>
        <KM evidence="3">4 mM for (S)-3-hydroxyisobutyrate</KM>
    </kinetics>
</comment>
<comment type="pathway">
    <text evidence="2">Cofactor degradation; nicotinate degradation; propanoate and pyruvate from 6-hydroxynicotinate: step 3/8.</text>
</comment>
<comment type="subunit">
    <text evidence="2 3">Homotetramer.</text>
</comment>
<comment type="similarity">
    <text evidence="5">Belongs to the HIBADH-related family.</text>
</comment>
<evidence type="ECO:0000250" key="1">
    <source>
        <dbReference type="UniProtKB" id="P0ABQ3"/>
    </source>
</evidence>
<evidence type="ECO:0000269" key="2">
    <source>
    </source>
</evidence>
<evidence type="ECO:0000269" key="3">
    <source>
    </source>
</evidence>
<evidence type="ECO:0000303" key="4">
    <source>
    </source>
</evidence>
<evidence type="ECO:0000305" key="5"/>
<evidence type="ECO:0000312" key="6">
    <source>
        <dbReference type="EMBL" id="ABC88394.1"/>
    </source>
</evidence>
<evidence type="ECO:0007829" key="7">
    <source>
        <dbReference type="PDB" id="3CKY"/>
    </source>
</evidence>
<protein>
    <recommendedName>
        <fullName evidence="4">2-(hydroxymethyl)glutarate dehydrogenase</fullName>
        <ecNumber>1.1.1.291</ecNumber>
    </recommendedName>
</protein>
<reference evidence="5 6" key="1">
    <citation type="journal article" date="2006" name="Proc. Natl. Acad. Sci. U.S.A.">
        <title>Molecular and functional analysis of nicotinate catabolism in Eubacterium barkeri.</title>
        <authorList>
            <person name="Alhapel A."/>
            <person name="Darley D.J."/>
            <person name="Wagener N."/>
            <person name="Eckel E."/>
            <person name="Elsner N."/>
            <person name="Pierik A.J."/>
        </authorList>
    </citation>
    <scope>NUCLEOTIDE SEQUENCE [GENOMIC DNA]</scope>
    <scope>CATALYTIC ACTIVITY</scope>
    <scope>PATHWAY</scope>
    <scope>SUBUNIT</scope>
    <source>
        <strain evidence="6">ATCC 25849 / DSM 1223 / JCM 1389 / NCIMB 10623 / VKM B-1775 / VPI 5359</strain>
    </source>
</reference>
<reference evidence="5" key="2">
    <citation type="journal article" date="2008" name="J. Mol. Biol.">
        <title>Structural and kinetic properties of a beta-hydroxyacid dehydrogenase involved in nicotinate fermentation.</title>
        <authorList>
            <person name="Reitz S."/>
            <person name="Alhapel A."/>
            <person name="Essen L.O."/>
            <person name="Pierik A.J."/>
        </authorList>
    </citation>
    <scope>X-RAY CRYSTALLOGRAPHY (2.30 ANGSTROMS)</scope>
    <scope>FUNCTION</scope>
    <scope>CATALYTIC ACTIVITY</scope>
    <scope>BIOPHYSICOCHEMICAL PROPERTIES</scope>
    <scope>SUBUNIT</scope>
</reference>
<gene>
    <name evidence="6" type="primary">Hgd</name>
</gene>
<feature type="chain" id="PRO_0000403974" description="2-(hydroxymethyl)glutarate dehydrogenase">
    <location>
        <begin position="1"/>
        <end position="301"/>
    </location>
</feature>
<feature type="active site" evidence="1">
    <location>
        <position position="174"/>
    </location>
</feature>
<feature type="binding site" evidence="1">
    <location>
        <begin position="8"/>
        <end position="22"/>
    </location>
    <ligand>
        <name>NAD(+)</name>
        <dbReference type="ChEBI" id="CHEBI:57540"/>
    </ligand>
</feature>
<feature type="binding site" evidence="1">
    <location>
        <position position="99"/>
    </location>
    <ligand>
        <name>NAD(+)</name>
        <dbReference type="ChEBI" id="CHEBI:57540"/>
    </ligand>
</feature>
<feature type="binding site" evidence="1">
    <location>
        <position position="243"/>
    </location>
    <ligand>
        <name>NAD(+)</name>
        <dbReference type="ChEBI" id="CHEBI:57540"/>
    </ligand>
</feature>
<feature type="strand" evidence="7">
    <location>
        <begin position="6"/>
        <end position="10"/>
    </location>
</feature>
<feature type="helix" evidence="7">
    <location>
        <begin position="16"/>
        <end position="25"/>
    </location>
</feature>
<feature type="strand" evidence="7">
    <location>
        <begin position="29"/>
        <end position="33"/>
    </location>
</feature>
<feature type="helix" evidence="7">
    <location>
        <begin position="37"/>
        <end position="44"/>
    </location>
</feature>
<feature type="turn" evidence="7">
    <location>
        <begin position="45"/>
        <end position="47"/>
    </location>
</feature>
<feature type="helix" evidence="7">
    <location>
        <begin position="54"/>
        <end position="60"/>
    </location>
</feature>
<feature type="strand" evidence="7">
    <location>
        <begin position="62"/>
        <end position="66"/>
    </location>
</feature>
<feature type="helix" evidence="7">
    <location>
        <begin position="71"/>
        <end position="79"/>
    </location>
</feature>
<feature type="helix" evidence="7">
    <location>
        <begin position="84"/>
        <end position="87"/>
    </location>
</feature>
<feature type="strand" evidence="7">
    <location>
        <begin position="93"/>
        <end position="96"/>
    </location>
</feature>
<feature type="helix" evidence="7">
    <location>
        <begin position="102"/>
        <end position="114"/>
    </location>
</feature>
<feature type="strand" evidence="7">
    <location>
        <begin position="118"/>
        <end position="121"/>
    </location>
</feature>
<feature type="strand" evidence="7">
    <location>
        <begin position="124"/>
        <end position="126"/>
    </location>
</feature>
<feature type="helix" evidence="7">
    <location>
        <begin position="127"/>
        <end position="132"/>
    </location>
</feature>
<feature type="strand" evidence="7">
    <location>
        <begin position="136"/>
        <end position="142"/>
    </location>
</feature>
<feature type="helix" evidence="7">
    <location>
        <begin position="144"/>
        <end position="157"/>
    </location>
</feature>
<feature type="strand" evidence="7">
    <location>
        <begin position="158"/>
        <end position="166"/>
    </location>
</feature>
<feature type="helix" evidence="7">
    <location>
        <begin position="169"/>
        <end position="197"/>
    </location>
</feature>
<feature type="helix" evidence="7">
    <location>
        <begin position="202"/>
        <end position="210"/>
    </location>
</feature>
<feature type="helix" evidence="7">
    <location>
        <begin position="217"/>
        <end position="222"/>
    </location>
</feature>
<feature type="helix" evidence="7">
    <location>
        <begin position="223"/>
        <end position="228"/>
    </location>
</feature>
<feature type="strand" evidence="7">
    <location>
        <begin position="233"/>
        <end position="237"/>
    </location>
</feature>
<feature type="helix" evidence="7">
    <location>
        <begin position="238"/>
        <end position="255"/>
    </location>
</feature>
<feature type="helix" evidence="7">
    <location>
        <begin position="260"/>
        <end position="274"/>
    </location>
</feature>
<feature type="helix" evidence="7">
    <location>
        <begin position="282"/>
        <end position="285"/>
    </location>
</feature>
<feature type="helix" evidence="7">
    <location>
        <begin position="286"/>
        <end position="293"/>
    </location>
</feature>
<accession>Q0QLF5</accession>